<protein>
    <recommendedName>
        <fullName>Putative early 21.8 kDa protein</fullName>
    </recommendedName>
</protein>
<name>VE26_NPVOP</name>
<accession>O10276</accession>
<comment type="function">
    <text evidence="1">This protein is required for viral late gene expression.</text>
</comment>
<proteinExistence type="inferred from homology"/>
<reference key="1">
    <citation type="journal article" date="1997" name="Virology">
        <title>The sequence of the Orgyia pseudotsugata multinucleocapsid nuclear polyhedrosis virus genome.</title>
        <authorList>
            <person name="Ahrens C.H."/>
            <person name="Russell R.R."/>
            <person name="Funk C.J."/>
            <person name="Evans J."/>
            <person name="Harwood S."/>
            <person name="Rohrmann G.F."/>
        </authorList>
    </citation>
    <scope>NUCLEOTIDE SEQUENCE [LARGE SCALE GENOMIC DNA]</scope>
</reference>
<organismHost>
    <name type="scientific">Orgyia pseudotsugata</name>
    <name type="common">Douglas-fir tussock moth</name>
    <dbReference type="NCBI Taxonomy" id="33414"/>
</organismHost>
<evidence type="ECO:0000250" key="1"/>
<gene>
    <name type="primary">DA26</name>
    <name type="ORF">ORF15</name>
</gene>
<dbReference type="EMBL" id="U75930">
    <property type="protein sequence ID" value="AAC59014.1"/>
    <property type="molecule type" value="Genomic_DNA"/>
</dbReference>
<dbReference type="RefSeq" id="NP_046171.1">
    <property type="nucleotide sequence ID" value="NC_001875.2"/>
</dbReference>
<dbReference type="SMR" id="O10276"/>
<dbReference type="KEGG" id="vg:912021"/>
<dbReference type="OrthoDB" id="15676at10239"/>
<dbReference type="Proteomes" id="UP000009248">
    <property type="component" value="Genome"/>
</dbReference>
<dbReference type="InterPro" id="IPR021286">
    <property type="entry name" value="Baculovirus_E26"/>
</dbReference>
<dbReference type="Pfam" id="PF11050">
    <property type="entry name" value="Viral_env_E26"/>
    <property type="match status" value="1"/>
</dbReference>
<sequence>METAQPPISYAPPKRGAVCAYVRTVVTTTTVSDSGGNNEDRLTQIVAQLQRTRLNFSKLSQLQRRRVRNMQKLIRKKNSVIANLAARLTTQKKTKHFAVTIRKNVIHTTSGSEQFVRQRVLELCANGGEQVFCARRADCARDRRRVAEALATALGAGVVASAANKRFEIEDEEKLVSAKLIVQQVLHDGDHSDTCAD</sequence>
<keyword id="KW-0244">Early protein</keyword>
<keyword id="KW-1185">Reference proteome</keyword>
<organism>
    <name type="scientific">Orgyia pseudotsugata multicapsid polyhedrosis virus</name>
    <name type="common">OpMNPV</name>
    <dbReference type="NCBI Taxonomy" id="262177"/>
    <lineage>
        <taxon>Viruses</taxon>
        <taxon>Viruses incertae sedis</taxon>
        <taxon>Naldaviricetes</taxon>
        <taxon>Lefavirales</taxon>
        <taxon>Baculoviridae</taxon>
        <taxon>Alphabaculovirus</taxon>
        <taxon>Alphabaculovirus orpseudotsugatae</taxon>
    </lineage>
</organism>
<feature type="chain" id="PRO_0000132858" description="Putative early 21.8 kDa protein">
    <location>
        <begin position="1"/>
        <end position="197"/>
    </location>
</feature>